<keyword id="KW-0963">Cytoplasm</keyword>
<keyword id="KW-0312">Gluconeogenesis</keyword>
<keyword id="KW-0324">Glycolysis</keyword>
<keyword id="KW-0413">Isomerase</keyword>
<keyword id="KW-1185">Reference proteome</keyword>
<proteinExistence type="inferred from homology"/>
<organism>
    <name type="scientific">Limosilactobacillus reuteri (strain DSM 20016)</name>
    <name type="common">Lactobacillus reuteri</name>
    <dbReference type="NCBI Taxonomy" id="557436"/>
    <lineage>
        <taxon>Bacteria</taxon>
        <taxon>Bacillati</taxon>
        <taxon>Bacillota</taxon>
        <taxon>Bacilli</taxon>
        <taxon>Lactobacillales</taxon>
        <taxon>Lactobacillaceae</taxon>
        <taxon>Limosilactobacillus</taxon>
    </lineage>
</organism>
<feature type="chain" id="PRO_1000060396" description="Glucose-6-phosphate isomerase">
    <location>
        <begin position="1"/>
        <end position="452"/>
    </location>
</feature>
<feature type="active site" description="Proton donor" evidence="1">
    <location>
        <position position="290"/>
    </location>
</feature>
<feature type="active site" evidence="1">
    <location>
        <position position="311"/>
    </location>
</feature>
<feature type="active site" evidence="1">
    <location>
        <position position="425"/>
    </location>
</feature>
<name>G6PI_LIMRD</name>
<sequence>MTHIKFDSSALKQFVHENELGEMQAMVNAANDELRNGTGAGADFRDWLHLPTEYDKEEFARIKKAADKIQRDSDVLVVIGIGGSYLGAQMAIDFLHNTFYQAQNAKDRKAPLVVFAGNSLSSTYVHDLIQLIGDKDFSINVVSKSGTTTEPSIAFRIFKGLLIKKYGENEANKRIYATTDKTKGALKTEADAHGYETFVIPDGVGGRYSVLSAVGLLPIAASGADIDKLMEGAAQAEKDYVDPDLTKNEAYQYAAYRNILYRKGYETELLENYEPNMRMFAEWWKQLAGESEGKDQKGIYPSSANFTTDLHSLGQYIQEGRRFLMETVVKLDKPNYDMEIPTEPDNLDGLGYLEGKTMDYVNTKAYEAVVAAHTDGGVPVMTVHIPQEDEYTLGYLIYFFEVAMGISGYLNGINPFNQPGVEAYKTNMFGLLGKPGYEEIGKELRAKMDKND</sequence>
<reference key="1">
    <citation type="journal article" date="2011" name="PLoS Genet.">
        <title>The evolution of host specialization in the vertebrate gut symbiont Lactobacillus reuteri.</title>
        <authorList>
            <person name="Frese S.A."/>
            <person name="Benson A.K."/>
            <person name="Tannock G.W."/>
            <person name="Loach D.M."/>
            <person name="Kim J."/>
            <person name="Zhang M."/>
            <person name="Oh P.L."/>
            <person name="Heng N.C."/>
            <person name="Patil P.B."/>
            <person name="Juge N."/>
            <person name="Mackenzie D.A."/>
            <person name="Pearson B.M."/>
            <person name="Lapidus A."/>
            <person name="Dalin E."/>
            <person name="Tice H."/>
            <person name="Goltsman E."/>
            <person name="Land M."/>
            <person name="Hauser L."/>
            <person name="Ivanova N."/>
            <person name="Kyrpides N.C."/>
            <person name="Walter J."/>
        </authorList>
    </citation>
    <scope>NUCLEOTIDE SEQUENCE [LARGE SCALE GENOMIC DNA]</scope>
    <source>
        <strain>DSM 20016</strain>
    </source>
</reference>
<evidence type="ECO:0000255" key="1">
    <source>
        <dbReference type="HAMAP-Rule" id="MF_00473"/>
    </source>
</evidence>
<protein>
    <recommendedName>
        <fullName evidence="1">Glucose-6-phosphate isomerase</fullName>
        <shortName evidence="1">GPI</shortName>
        <ecNumber evidence="1">5.3.1.9</ecNumber>
    </recommendedName>
    <alternativeName>
        <fullName evidence="1">Phosphoglucose isomerase</fullName>
        <shortName evidence="1">PGI</shortName>
    </alternativeName>
    <alternativeName>
        <fullName evidence="1">Phosphohexose isomerase</fullName>
        <shortName evidence="1">PHI</shortName>
    </alternativeName>
</protein>
<accession>A5VIL5</accession>
<dbReference type="EC" id="5.3.1.9" evidence="1"/>
<dbReference type="EMBL" id="CP000705">
    <property type="protein sequence ID" value="ABQ82689.1"/>
    <property type="molecule type" value="Genomic_DNA"/>
</dbReference>
<dbReference type="RefSeq" id="WP_003667509.1">
    <property type="nucleotide sequence ID" value="NC_009513.1"/>
</dbReference>
<dbReference type="SMR" id="A5VIL5"/>
<dbReference type="STRING" id="557436.Lreu_0420"/>
<dbReference type="KEGG" id="lre:Lreu_0420"/>
<dbReference type="PATRIC" id="fig|557436.17.peg.802"/>
<dbReference type="eggNOG" id="COG0166">
    <property type="taxonomic scope" value="Bacteria"/>
</dbReference>
<dbReference type="HOGENOM" id="CLU_037303_0_1_9"/>
<dbReference type="UniPathway" id="UPA00109">
    <property type="reaction ID" value="UER00181"/>
</dbReference>
<dbReference type="UniPathway" id="UPA00138"/>
<dbReference type="Proteomes" id="UP000001991">
    <property type="component" value="Chromosome"/>
</dbReference>
<dbReference type="GO" id="GO:0005829">
    <property type="term" value="C:cytosol"/>
    <property type="evidence" value="ECO:0007669"/>
    <property type="project" value="TreeGrafter"/>
</dbReference>
<dbReference type="GO" id="GO:0097367">
    <property type="term" value="F:carbohydrate derivative binding"/>
    <property type="evidence" value="ECO:0007669"/>
    <property type="project" value="InterPro"/>
</dbReference>
<dbReference type="GO" id="GO:0004347">
    <property type="term" value="F:glucose-6-phosphate isomerase activity"/>
    <property type="evidence" value="ECO:0007669"/>
    <property type="project" value="UniProtKB-UniRule"/>
</dbReference>
<dbReference type="GO" id="GO:0048029">
    <property type="term" value="F:monosaccharide binding"/>
    <property type="evidence" value="ECO:0007669"/>
    <property type="project" value="TreeGrafter"/>
</dbReference>
<dbReference type="GO" id="GO:0006094">
    <property type="term" value="P:gluconeogenesis"/>
    <property type="evidence" value="ECO:0007669"/>
    <property type="project" value="UniProtKB-UniRule"/>
</dbReference>
<dbReference type="GO" id="GO:0051156">
    <property type="term" value="P:glucose 6-phosphate metabolic process"/>
    <property type="evidence" value="ECO:0007669"/>
    <property type="project" value="TreeGrafter"/>
</dbReference>
<dbReference type="GO" id="GO:0006096">
    <property type="term" value="P:glycolytic process"/>
    <property type="evidence" value="ECO:0007669"/>
    <property type="project" value="UniProtKB-UniRule"/>
</dbReference>
<dbReference type="CDD" id="cd05015">
    <property type="entry name" value="SIS_PGI_1"/>
    <property type="match status" value="1"/>
</dbReference>
<dbReference type="CDD" id="cd05016">
    <property type="entry name" value="SIS_PGI_2"/>
    <property type="match status" value="1"/>
</dbReference>
<dbReference type="FunFam" id="3.40.50.10490:FF:000015">
    <property type="entry name" value="Glucose-6-phosphate isomerase"/>
    <property type="match status" value="1"/>
</dbReference>
<dbReference type="FunFam" id="3.40.50.10490:FF:000016">
    <property type="entry name" value="Glucose-6-phosphate isomerase"/>
    <property type="match status" value="1"/>
</dbReference>
<dbReference type="Gene3D" id="3.40.50.10490">
    <property type="entry name" value="Glucose-6-phosphate isomerase like protein, domain 1"/>
    <property type="match status" value="3"/>
</dbReference>
<dbReference type="HAMAP" id="MF_00473">
    <property type="entry name" value="G6P_isomerase"/>
    <property type="match status" value="1"/>
</dbReference>
<dbReference type="InterPro" id="IPR001672">
    <property type="entry name" value="G6P_Isomerase"/>
</dbReference>
<dbReference type="InterPro" id="IPR018189">
    <property type="entry name" value="Phosphoglucose_isomerase_CS"/>
</dbReference>
<dbReference type="InterPro" id="IPR046348">
    <property type="entry name" value="SIS_dom_sf"/>
</dbReference>
<dbReference type="InterPro" id="IPR035476">
    <property type="entry name" value="SIS_PGI_1"/>
</dbReference>
<dbReference type="InterPro" id="IPR035482">
    <property type="entry name" value="SIS_PGI_2"/>
</dbReference>
<dbReference type="NCBIfam" id="NF010697">
    <property type="entry name" value="PRK14097.1"/>
    <property type="match status" value="1"/>
</dbReference>
<dbReference type="PANTHER" id="PTHR11469">
    <property type="entry name" value="GLUCOSE-6-PHOSPHATE ISOMERASE"/>
    <property type="match status" value="1"/>
</dbReference>
<dbReference type="PANTHER" id="PTHR11469:SF1">
    <property type="entry name" value="GLUCOSE-6-PHOSPHATE ISOMERASE"/>
    <property type="match status" value="1"/>
</dbReference>
<dbReference type="Pfam" id="PF00342">
    <property type="entry name" value="PGI"/>
    <property type="match status" value="1"/>
</dbReference>
<dbReference type="PRINTS" id="PR00662">
    <property type="entry name" value="G6PISOMERASE"/>
</dbReference>
<dbReference type="SUPFAM" id="SSF53697">
    <property type="entry name" value="SIS domain"/>
    <property type="match status" value="1"/>
</dbReference>
<dbReference type="PROSITE" id="PS00765">
    <property type="entry name" value="P_GLUCOSE_ISOMERASE_1"/>
    <property type="match status" value="1"/>
</dbReference>
<dbReference type="PROSITE" id="PS00174">
    <property type="entry name" value="P_GLUCOSE_ISOMERASE_2"/>
    <property type="match status" value="1"/>
</dbReference>
<dbReference type="PROSITE" id="PS51463">
    <property type="entry name" value="P_GLUCOSE_ISOMERASE_3"/>
    <property type="match status" value="1"/>
</dbReference>
<comment type="function">
    <text evidence="1">Catalyzes the reversible isomerization of glucose-6-phosphate to fructose-6-phosphate.</text>
</comment>
<comment type="catalytic activity">
    <reaction evidence="1">
        <text>alpha-D-glucose 6-phosphate = beta-D-fructose 6-phosphate</text>
        <dbReference type="Rhea" id="RHEA:11816"/>
        <dbReference type="ChEBI" id="CHEBI:57634"/>
        <dbReference type="ChEBI" id="CHEBI:58225"/>
        <dbReference type="EC" id="5.3.1.9"/>
    </reaction>
</comment>
<comment type="pathway">
    <text evidence="1">Carbohydrate biosynthesis; gluconeogenesis.</text>
</comment>
<comment type="pathway">
    <text evidence="1">Carbohydrate degradation; glycolysis; D-glyceraldehyde 3-phosphate and glycerone phosphate from D-glucose: step 2/4.</text>
</comment>
<comment type="subcellular location">
    <subcellularLocation>
        <location evidence="1">Cytoplasm</location>
    </subcellularLocation>
</comment>
<comment type="similarity">
    <text evidence="1">Belongs to the GPI family.</text>
</comment>
<gene>
    <name evidence="1" type="primary">pgi</name>
    <name type="ordered locus">Lreu_0420</name>
</gene>